<evidence type="ECO:0000255" key="1">
    <source>
        <dbReference type="HAMAP-Rule" id="MF_00397"/>
    </source>
</evidence>
<sequence length="292" mass="31678">MSMPATSTKTTKLATSLIDEYALLGWRAMLTEVNLSPKPGLVDRINCGAHKDMALEDFHRSALAIQGWLPRFIEFGACSAEMAPEAVLHGLRPIGMACEGDMFRATAGVNTHKGSIFSLGLLCAAIGRLLQLNQSLTPTTVCSTAASFCRGLTDRELRTNNSQLTAGQRLYQQLALTGARGEAEAGYPLVINHALPHYLTLLDQGLDPELALLDTLLLLMAINGDTNVASRGGEGGLRWLQREAQTLLQKGGIRTLADLDYLRQFDRECIERNLSPGGSADLLILTWFLAQI</sequence>
<proteinExistence type="inferred from homology"/>
<protein>
    <recommendedName>
        <fullName evidence="1">Probable 2-(5''-triphosphoribosyl)-3'-dephosphocoenzyme-A synthase</fullName>
        <shortName evidence="1">2-(5''-triphosphoribosyl)-3'-dephospho-CoA synthase</shortName>
        <ecNumber evidence="1">2.4.2.52</ecNumber>
    </recommendedName>
</protein>
<feature type="chain" id="PRO_1000189593" description="Probable 2-(5''-triphosphoribosyl)-3'-dephosphocoenzyme-A synthase">
    <location>
        <begin position="1"/>
        <end position="292"/>
    </location>
</feature>
<gene>
    <name evidence="1" type="primary">citG</name>
    <name type="ordered locus">SbBS512_E0527</name>
</gene>
<comment type="catalytic activity">
    <reaction evidence="1">
        <text>3'-dephospho-CoA + ATP = 2'-(5''-triphospho-alpha-D-ribosyl)-3'-dephospho-CoA + adenine</text>
        <dbReference type="Rhea" id="RHEA:15117"/>
        <dbReference type="ChEBI" id="CHEBI:16708"/>
        <dbReference type="ChEBI" id="CHEBI:30616"/>
        <dbReference type="ChEBI" id="CHEBI:57328"/>
        <dbReference type="ChEBI" id="CHEBI:61378"/>
        <dbReference type="EC" id="2.4.2.52"/>
    </reaction>
</comment>
<comment type="similarity">
    <text evidence="1">Belongs to the CitG/MdcB family.</text>
</comment>
<accession>B2TTH6</accession>
<dbReference type="EC" id="2.4.2.52" evidence="1"/>
<dbReference type="EMBL" id="CP001063">
    <property type="protein sequence ID" value="ACD06571.1"/>
    <property type="molecule type" value="Genomic_DNA"/>
</dbReference>
<dbReference type="RefSeq" id="WP_000062463.1">
    <property type="nucleotide sequence ID" value="NC_010658.1"/>
</dbReference>
<dbReference type="STRING" id="344609.SbBS512_E0527"/>
<dbReference type="KEGG" id="sbc:SbBS512_E0527"/>
<dbReference type="HOGENOM" id="CLU_056179_1_0_6"/>
<dbReference type="Proteomes" id="UP000001030">
    <property type="component" value="Chromosome"/>
</dbReference>
<dbReference type="GO" id="GO:0005524">
    <property type="term" value="F:ATP binding"/>
    <property type="evidence" value="ECO:0007669"/>
    <property type="project" value="UniProtKB-KW"/>
</dbReference>
<dbReference type="GO" id="GO:0046917">
    <property type="term" value="F:triphosphoribosyl-dephospho-CoA synthase activity"/>
    <property type="evidence" value="ECO:0007669"/>
    <property type="project" value="UniProtKB-UniRule"/>
</dbReference>
<dbReference type="GO" id="GO:0051191">
    <property type="term" value="P:prosthetic group biosynthetic process"/>
    <property type="evidence" value="ECO:0007669"/>
    <property type="project" value="TreeGrafter"/>
</dbReference>
<dbReference type="FunFam" id="1.10.4200.10:FF:000001">
    <property type="entry name" value="Triphosphoribosyl-dephospho-CoA synthase CitG"/>
    <property type="match status" value="1"/>
</dbReference>
<dbReference type="Gene3D" id="1.10.4200.10">
    <property type="entry name" value="Triphosphoribosyl-dephospho-CoA protein"/>
    <property type="match status" value="1"/>
</dbReference>
<dbReference type="HAMAP" id="MF_00397">
    <property type="entry name" value="CitG"/>
    <property type="match status" value="1"/>
</dbReference>
<dbReference type="InterPro" id="IPR002736">
    <property type="entry name" value="CitG"/>
</dbReference>
<dbReference type="InterPro" id="IPR017551">
    <property type="entry name" value="TriPribosyl-deP-CoA_syn_CitG"/>
</dbReference>
<dbReference type="NCBIfam" id="TIGR03125">
    <property type="entry name" value="citrate_citG"/>
    <property type="match status" value="1"/>
</dbReference>
<dbReference type="NCBIfam" id="NF007503">
    <property type="entry name" value="PRK10096.1"/>
    <property type="match status" value="1"/>
</dbReference>
<dbReference type="PANTHER" id="PTHR30201:SF2">
    <property type="entry name" value="2-(5''-TRIPHOSPHORIBOSYL)-3'-DEPHOSPHOCOENZYME-A SYNTHASE"/>
    <property type="match status" value="1"/>
</dbReference>
<dbReference type="PANTHER" id="PTHR30201">
    <property type="entry name" value="TRIPHOSPHORIBOSYL-DEPHOSPHO-COA SYNTHASE"/>
    <property type="match status" value="1"/>
</dbReference>
<dbReference type="Pfam" id="PF01874">
    <property type="entry name" value="CitG"/>
    <property type="match status" value="1"/>
</dbReference>
<keyword id="KW-0067">ATP-binding</keyword>
<keyword id="KW-0547">Nucleotide-binding</keyword>
<keyword id="KW-1185">Reference proteome</keyword>
<keyword id="KW-0808">Transferase</keyword>
<organism>
    <name type="scientific">Shigella boydii serotype 18 (strain CDC 3083-94 / BS512)</name>
    <dbReference type="NCBI Taxonomy" id="344609"/>
    <lineage>
        <taxon>Bacteria</taxon>
        <taxon>Pseudomonadati</taxon>
        <taxon>Pseudomonadota</taxon>
        <taxon>Gammaproteobacteria</taxon>
        <taxon>Enterobacterales</taxon>
        <taxon>Enterobacteriaceae</taxon>
        <taxon>Shigella</taxon>
    </lineage>
</organism>
<name>CITG_SHIB3</name>
<reference key="1">
    <citation type="submission" date="2008-05" db="EMBL/GenBank/DDBJ databases">
        <title>Complete sequence of Shigella boydii serotype 18 strain BS512.</title>
        <authorList>
            <person name="Rasko D.A."/>
            <person name="Rosovitz M."/>
            <person name="Maurelli A.T."/>
            <person name="Myers G."/>
            <person name="Seshadri R."/>
            <person name="Cer R."/>
            <person name="Jiang L."/>
            <person name="Ravel J."/>
            <person name="Sebastian Y."/>
        </authorList>
    </citation>
    <scope>NUCLEOTIDE SEQUENCE [LARGE SCALE GENOMIC DNA]</scope>
    <source>
        <strain>CDC 3083-94 / BS512</strain>
    </source>
</reference>